<organism>
    <name type="scientific">Actinobacillus pleuropneumoniae serotype 3 (strain JL03)</name>
    <dbReference type="NCBI Taxonomy" id="434271"/>
    <lineage>
        <taxon>Bacteria</taxon>
        <taxon>Pseudomonadati</taxon>
        <taxon>Pseudomonadota</taxon>
        <taxon>Gammaproteobacteria</taxon>
        <taxon>Pasteurellales</taxon>
        <taxon>Pasteurellaceae</taxon>
        <taxon>Actinobacillus</taxon>
    </lineage>
</organism>
<sequence>MINEIKKDTQDRMEKSLEALKSHISKIRTGRAQPSLLDGIQVEYYGSATPLRQLANVVAEDARTLAVNVFDRSLISAVEKAILTSDLGLNPSSAGATIRVPLPPLTEERRRDLIKIVKGEGEQGKIAIRNVRRDANDQIKALLKDKEISEDEERKAQDEIQKITDGYVKKVDEVLAAKEKELLDF</sequence>
<accession>B0BUC8</accession>
<proteinExistence type="inferred from homology"/>
<keyword id="KW-0963">Cytoplasm</keyword>
<keyword id="KW-0648">Protein biosynthesis</keyword>
<name>RRF_ACTPJ</name>
<dbReference type="EMBL" id="CP000687">
    <property type="protein sequence ID" value="ABY69133.1"/>
    <property type="molecule type" value="Genomic_DNA"/>
</dbReference>
<dbReference type="RefSeq" id="WP_005596791.1">
    <property type="nucleotide sequence ID" value="NC_010278.1"/>
</dbReference>
<dbReference type="SMR" id="B0BUC8"/>
<dbReference type="GeneID" id="48598758"/>
<dbReference type="KEGG" id="apj:APJL_0563"/>
<dbReference type="HOGENOM" id="CLU_073981_2_0_6"/>
<dbReference type="Proteomes" id="UP000008547">
    <property type="component" value="Chromosome"/>
</dbReference>
<dbReference type="GO" id="GO:0005829">
    <property type="term" value="C:cytosol"/>
    <property type="evidence" value="ECO:0007669"/>
    <property type="project" value="GOC"/>
</dbReference>
<dbReference type="GO" id="GO:0043023">
    <property type="term" value="F:ribosomal large subunit binding"/>
    <property type="evidence" value="ECO:0007669"/>
    <property type="project" value="TreeGrafter"/>
</dbReference>
<dbReference type="GO" id="GO:0002184">
    <property type="term" value="P:cytoplasmic translational termination"/>
    <property type="evidence" value="ECO:0007669"/>
    <property type="project" value="TreeGrafter"/>
</dbReference>
<dbReference type="CDD" id="cd00520">
    <property type="entry name" value="RRF"/>
    <property type="match status" value="1"/>
</dbReference>
<dbReference type="FunFam" id="1.10.132.20:FF:000001">
    <property type="entry name" value="Ribosome-recycling factor"/>
    <property type="match status" value="1"/>
</dbReference>
<dbReference type="FunFam" id="3.30.1360.40:FF:000001">
    <property type="entry name" value="Ribosome-recycling factor"/>
    <property type="match status" value="1"/>
</dbReference>
<dbReference type="Gene3D" id="3.30.1360.40">
    <property type="match status" value="1"/>
</dbReference>
<dbReference type="Gene3D" id="1.10.132.20">
    <property type="entry name" value="Ribosome-recycling factor"/>
    <property type="match status" value="1"/>
</dbReference>
<dbReference type="HAMAP" id="MF_00040">
    <property type="entry name" value="RRF"/>
    <property type="match status" value="1"/>
</dbReference>
<dbReference type="InterPro" id="IPR002661">
    <property type="entry name" value="Ribosome_recyc_fac"/>
</dbReference>
<dbReference type="InterPro" id="IPR023584">
    <property type="entry name" value="Ribosome_recyc_fac_dom"/>
</dbReference>
<dbReference type="InterPro" id="IPR036191">
    <property type="entry name" value="RRF_sf"/>
</dbReference>
<dbReference type="NCBIfam" id="TIGR00496">
    <property type="entry name" value="frr"/>
    <property type="match status" value="1"/>
</dbReference>
<dbReference type="PANTHER" id="PTHR20982:SF3">
    <property type="entry name" value="MITOCHONDRIAL RIBOSOME RECYCLING FACTOR PSEUDO 1"/>
    <property type="match status" value="1"/>
</dbReference>
<dbReference type="PANTHER" id="PTHR20982">
    <property type="entry name" value="RIBOSOME RECYCLING FACTOR"/>
    <property type="match status" value="1"/>
</dbReference>
<dbReference type="Pfam" id="PF01765">
    <property type="entry name" value="RRF"/>
    <property type="match status" value="1"/>
</dbReference>
<dbReference type="SUPFAM" id="SSF55194">
    <property type="entry name" value="Ribosome recycling factor, RRF"/>
    <property type="match status" value="1"/>
</dbReference>
<gene>
    <name evidence="1" type="primary">frr</name>
    <name type="ordered locus">APJL_0563</name>
</gene>
<comment type="function">
    <text evidence="1">Responsible for the release of ribosomes from messenger RNA at the termination of protein biosynthesis. May increase the efficiency of translation by recycling ribosomes from one round of translation to another.</text>
</comment>
<comment type="subcellular location">
    <subcellularLocation>
        <location evidence="1">Cytoplasm</location>
    </subcellularLocation>
</comment>
<comment type="similarity">
    <text evidence="1">Belongs to the RRF family.</text>
</comment>
<feature type="chain" id="PRO_1000090701" description="Ribosome-recycling factor">
    <location>
        <begin position="1"/>
        <end position="185"/>
    </location>
</feature>
<evidence type="ECO:0000255" key="1">
    <source>
        <dbReference type="HAMAP-Rule" id="MF_00040"/>
    </source>
</evidence>
<reference key="1">
    <citation type="journal article" date="2008" name="PLoS ONE">
        <title>Genome biology of Actinobacillus pleuropneumoniae JL03, an isolate of serotype 3 prevalent in China.</title>
        <authorList>
            <person name="Xu Z."/>
            <person name="Zhou Y."/>
            <person name="Li L."/>
            <person name="Zhou R."/>
            <person name="Xiao S."/>
            <person name="Wan Y."/>
            <person name="Zhang S."/>
            <person name="Wang K."/>
            <person name="Li W."/>
            <person name="Li L."/>
            <person name="Jin H."/>
            <person name="Kang M."/>
            <person name="Dalai B."/>
            <person name="Li T."/>
            <person name="Liu L."/>
            <person name="Cheng Y."/>
            <person name="Zhang L."/>
            <person name="Xu T."/>
            <person name="Zheng H."/>
            <person name="Pu S."/>
            <person name="Wang B."/>
            <person name="Gu W."/>
            <person name="Zhang X.L."/>
            <person name="Zhu G.-F."/>
            <person name="Wang S."/>
            <person name="Zhao G.-P."/>
            <person name="Chen H."/>
        </authorList>
    </citation>
    <scope>NUCLEOTIDE SEQUENCE [LARGE SCALE GENOMIC DNA]</scope>
    <source>
        <strain>JL03</strain>
    </source>
</reference>
<protein>
    <recommendedName>
        <fullName evidence="1">Ribosome-recycling factor</fullName>
        <shortName evidence="1">RRF</shortName>
    </recommendedName>
    <alternativeName>
        <fullName evidence="1">Ribosome-releasing factor</fullName>
    </alternativeName>
</protein>